<sequence length="100" mass="11084">MKISEEEVRHVAKLSKLSFSESETTTFATTLSKIVDMVELLNEVDTEGVAITTTMADKKNVMRQDIAEEGTDRALLFKNVPEKENHFIKVPAILDDGGDA</sequence>
<gene>
    <name evidence="1" type="primary">gatC</name>
    <name type="ordered locus">Spy49_1384c</name>
</gene>
<comment type="function">
    <text evidence="1">Allows the formation of correctly charged Asn-tRNA(Asn) or Gln-tRNA(Gln) through the transamidation of misacylated Asp-tRNA(Asn) or Glu-tRNA(Gln) in organisms which lack either or both of asparaginyl-tRNA or glutaminyl-tRNA synthetases. The reaction takes place in the presence of glutamine and ATP through an activated phospho-Asp-tRNA(Asn) or phospho-Glu-tRNA(Gln).</text>
</comment>
<comment type="catalytic activity">
    <reaction evidence="1">
        <text>L-glutamyl-tRNA(Gln) + L-glutamine + ATP + H2O = L-glutaminyl-tRNA(Gln) + L-glutamate + ADP + phosphate + H(+)</text>
        <dbReference type="Rhea" id="RHEA:17521"/>
        <dbReference type="Rhea" id="RHEA-COMP:9681"/>
        <dbReference type="Rhea" id="RHEA-COMP:9684"/>
        <dbReference type="ChEBI" id="CHEBI:15377"/>
        <dbReference type="ChEBI" id="CHEBI:15378"/>
        <dbReference type="ChEBI" id="CHEBI:29985"/>
        <dbReference type="ChEBI" id="CHEBI:30616"/>
        <dbReference type="ChEBI" id="CHEBI:43474"/>
        <dbReference type="ChEBI" id="CHEBI:58359"/>
        <dbReference type="ChEBI" id="CHEBI:78520"/>
        <dbReference type="ChEBI" id="CHEBI:78521"/>
        <dbReference type="ChEBI" id="CHEBI:456216"/>
    </reaction>
</comment>
<comment type="catalytic activity">
    <reaction evidence="1">
        <text>L-aspartyl-tRNA(Asn) + L-glutamine + ATP + H2O = L-asparaginyl-tRNA(Asn) + L-glutamate + ADP + phosphate + 2 H(+)</text>
        <dbReference type="Rhea" id="RHEA:14513"/>
        <dbReference type="Rhea" id="RHEA-COMP:9674"/>
        <dbReference type="Rhea" id="RHEA-COMP:9677"/>
        <dbReference type="ChEBI" id="CHEBI:15377"/>
        <dbReference type="ChEBI" id="CHEBI:15378"/>
        <dbReference type="ChEBI" id="CHEBI:29985"/>
        <dbReference type="ChEBI" id="CHEBI:30616"/>
        <dbReference type="ChEBI" id="CHEBI:43474"/>
        <dbReference type="ChEBI" id="CHEBI:58359"/>
        <dbReference type="ChEBI" id="CHEBI:78515"/>
        <dbReference type="ChEBI" id="CHEBI:78516"/>
        <dbReference type="ChEBI" id="CHEBI:456216"/>
    </reaction>
</comment>
<comment type="subunit">
    <text evidence="1">Heterotrimer of A, B and C subunits.</text>
</comment>
<comment type="similarity">
    <text evidence="1">Belongs to the GatC family.</text>
</comment>
<organism>
    <name type="scientific">Streptococcus pyogenes serotype M49 (strain NZ131)</name>
    <dbReference type="NCBI Taxonomy" id="471876"/>
    <lineage>
        <taxon>Bacteria</taxon>
        <taxon>Bacillati</taxon>
        <taxon>Bacillota</taxon>
        <taxon>Bacilli</taxon>
        <taxon>Lactobacillales</taxon>
        <taxon>Streptococcaceae</taxon>
        <taxon>Streptococcus</taxon>
    </lineage>
</organism>
<protein>
    <recommendedName>
        <fullName evidence="1">Aspartyl/glutamyl-tRNA(Asn/Gln) amidotransferase subunit C</fullName>
        <shortName evidence="1">Asp/Glu-ADT subunit C</shortName>
        <ecNumber evidence="1">6.3.5.-</ecNumber>
    </recommendedName>
</protein>
<name>GATC_STRPZ</name>
<reference key="1">
    <citation type="journal article" date="2008" name="J. Bacteriol.">
        <title>Genome sequence of a nephritogenic and highly transformable M49 strain of Streptococcus pyogenes.</title>
        <authorList>
            <person name="McShan W.M."/>
            <person name="Ferretti J.J."/>
            <person name="Karasawa T."/>
            <person name="Suvorov A.N."/>
            <person name="Lin S."/>
            <person name="Qin B."/>
            <person name="Jia H."/>
            <person name="Kenton S."/>
            <person name="Najar F."/>
            <person name="Wu H."/>
            <person name="Scott J."/>
            <person name="Roe B.A."/>
            <person name="Savic D.J."/>
        </authorList>
    </citation>
    <scope>NUCLEOTIDE SEQUENCE [LARGE SCALE GENOMIC DNA]</scope>
    <source>
        <strain>NZ131</strain>
    </source>
</reference>
<proteinExistence type="inferred from homology"/>
<dbReference type="EC" id="6.3.5.-" evidence="1"/>
<dbReference type="EMBL" id="CP000829">
    <property type="protein sequence ID" value="ACI61662.1"/>
    <property type="molecule type" value="Genomic_DNA"/>
</dbReference>
<dbReference type="SMR" id="B5XI00"/>
<dbReference type="KEGG" id="soz:Spy49_1384c"/>
<dbReference type="HOGENOM" id="CLU_105899_1_2_9"/>
<dbReference type="Proteomes" id="UP000001039">
    <property type="component" value="Chromosome"/>
</dbReference>
<dbReference type="GO" id="GO:0050566">
    <property type="term" value="F:asparaginyl-tRNA synthase (glutamine-hydrolyzing) activity"/>
    <property type="evidence" value="ECO:0007669"/>
    <property type="project" value="RHEA"/>
</dbReference>
<dbReference type="GO" id="GO:0005524">
    <property type="term" value="F:ATP binding"/>
    <property type="evidence" value="ECO:0007669"/>
    <property type="project" value="UniProtKB-KW"/>
</dbReference>
<dbReference type="GO" id="GO:0050567">
    <property type="term" value="F:glutaminyl-tRNA synthase (glutamine-hydrolyzing) activity"/>
    <property type="evidence" value="ECO:0007669"/>
    <property type="project" value="UniProtKB-UniRule"/>
</dbReference>
<dbReference type="GO" id="GO:0070681">
    <property type="term" value="P:glutaminyl-tRNAGln biosynthesis via transamidation"/>
    <property type="evidence" value="ECO:0007669"/>
    <property type="project" value="TreeGrafter"/>
</dbReference>
<dbReference type="GO" id="GO:0006450">
    <property type="term" value="P:regulation of translational fidelity"/>
    <property type="evidence" value="ECO:0007669"/>
    <property type="project" value="InterPro"/>
</dbReference>
<dbReference type="GO" id="GO:0006412">
    <property type="term" value="P:translation"/>
    <property type="evidence" value="ECO:0007669"/>
    <property type="project" value="UniProtKB-UniRule"/>
</dbReference>
<dbReference type="Gene3D" id="1.10.20.60">
    <property type="entry name" value="Glu-tRNAGln amidotransferase C subunit, N-terminal domain"/>
    <property type="match status" value="1"/>
</dbReference>
<dbReference type="HAMAP" id="MF_00122">
    <property type="entry name" value="GatC"/>
    <property type="match status" value="1"/>
</dbReference>
<dbReference type="InterPro" id="IPR036113">
    <property type="entry name" value="Asp/Glu-ADT_sf_sub_c"/>
</dbReference>
<dbReference type="InterPro" id="IPR003837">
    <property type="entry name" value="GatC"/>
</dbReference>
<dbReference type="NCBIfam" id="TIGR00135">
    <property type="entry name" value="gatC"/>
    <property type="match status" value="1"/>
</dbReference>
<dbReference type="PANTHER" id="PTHR15004">
    <property type="entry name" value="GLUTAMYL-TRNA(GLN) AMIDOTRANSFERASE SUBUNIT C, MITOCHONDRIAL"/>
    <property type="match status" value="1"/>
</dbReference>
<dbReference type="PANTHER" id="PTHR15004:SF0">
    <property type="entry name" value="GLUTAMYL-TRNA(GLN) AMIDOTRANSFERASE SUBUNIT C, MITOCHONDRIAL"/>
    <property type="match status" value="1"/>
</dbReference>
<dbReference type="Pfam" id="PF02686">
    <property type="entry name" value="GatC"/>
    <property type="match status" value="1"/>
</dbReference>
<dbReference type="SUPFAM" id="SSF141000">
    <property type="entry name" value="Glu-tRNAGln amidotransferase C subunit"/>
    <property type="match status" value="1"/>
</dbReference>
<keyword id="KW-0067">ATP-binding</keyword>
<keyword id="KW-0436">Ligase</keyword>
<keyword id="KW-0547">Nucleotide-binding</keyword>
<keyword id="KW-0648">Protein biosynthesis</keyword>
<evidence type="ECO:0000255" key="1">
    <source>
        <dbReference type="HAMAP-Rule" id="MF_00122"/>
    </source>
</evidence>
<accession>B5XI00</accession>
<feature type="chain" id="PRO_1000095318" description="Aspartyl/glutamyl-tRNA(Asn/Gln) amidotransferase subunit C">
    <location>
        <begin position="1"/>
        <end position="100"/>
    </location>
</feature>